<name>MDH_STRAW</name>
<protein>
    <recommendedName>
        <fullName evidence="1 3">Malate dehydrogenase</fullName>
        <ecNumber evidence="1 2">1.1.1.37</ecNumber>
    </recommendedName>
</protein>
<sequence length="329" mass="34689">MTRTPVNVTVTGAAGQIGYALLFRIASGQLLGADVPVKLRLLEITPALKAAEGTAMELDDCAFPLLQGIDITDDPNVAFDGTNVGLLVGARPRTKGMERGDLLSANGGIFKPQGKAINDNAADDVKILVVGNPANTNALIAQAAAPDVPAERFTAMTRLDHNRALTQLAKKTGSTVADIKRLTIWGNHSATQYPDIFHASVAGKNAAEVVNDEKWLAEDFIPTVAKRGAAIIEARGASSAASAANAAIDHVYTWVNGTADGDWTSMGIPSDGSYGVPEGLISSFPVTTKDGRYEIVQGLEINEFSRARIDASVKELEEEREAVRALGLI</sequence>
<dbReference type="EC" id="1.1.1.37" evidence="1 2"/>
<dbReference type="EMBL" id="BA000030">
    <property type="protein sequence ID" value="BAC71148.1"/>
    <property type="molecule type" value="Genomic_DNA"/>
</dbReference>
<dbReference type="RefSeq" id="WP_010984867.1">
    <property type="nucleotide sequence ID" value="NZ_JZJK01000090.1"/>
</dbReference>
<dbReference type="SMR" id="Q82HS2"/>
<dbReference type="GeneID" id="41540506"/>
<dbReference type="KEGG" id="sma:SAVERM_3436"/>
<dbReference type="eggNOG" id="COG0039">
    <property type="taxonomic scope" value="Bacteria"/>
</dbReference>
<dbReference type="HOGENOM" id="CLU_040727_2_0_11"/>
<dbReference type="OrthoDB" id="9802969at2"/>
<dbReference type="Proteomes" id="UP000000428">
    <property type="component" value="Chromosome"/>
</dbReference>
<dbReference type="GO" id="GO:0030060">
    <property type="term" value="F:L-malate dehydrogenase (NAD+) activity"/>
    <property type="evidence" value="ECO:0007669"/>
    <property type="project" value="UniProtKB-UniRule"/>
</dbReference>
<dbReference type="GO" id="GO:0006108">
    <property type="term" value="P:malate metabolic process"/>
    <property type="evidence" value="ECO:0007669"/>
    <property type="project" value="InterPro"/>
</dbReference>
<dbReference type="GO" id="GO:0006099">
    <property type="term" value="P:tricarboxylic acid cycle"/>
    <property type="evidence" value="ECO:0007669"/>
    <property type="project" value="UniProtKB-UniRule"/>
</dbReference>
<dbReference type="CDD" id="cd01338">
    <property type="entry name" value="MDH_chloroplast-like"/>
    <property type="match status" value="1"/>
</dbReference>
<dbReference type="FunFam" id="3.40.50.720:FF:000010">
    <property type="entry name" value="Malate dehydrogenase"/>
    <property type="match status" value="1"/>
</dbReference>
<dbReference type="FunFam" id="3.90.110.10:FF:000002">
    <property type="entry name" value="Malate dehydrogenase"/>
    <property type="match status" value="1"/>
</dbReference>
<dbReference type="Gene3D" id="3.90.110.10">
    <property type="entry name" value="Lactate dehydrogenase/glycoside hydrolase, family 4, C-terminal"/>
    <property type="match status" value="1"/>
</dbReference>
<dbReference type="Gene3D" id="3.40.50.720">
    <property type="entry name" value="NAD(P)-binding Rossmann-like Domain"/>
    <property type="match status" value="1"/>
</dbReference>
<dbReference type="HAMAP" id="MF_01517">
    <property type="entry name" value="Malate_dehydrog_2"/>
    <property type="match status" value="1"/>
</dbReference>
<dbReference type="InterPro" id="IPR001557">
    <property type="entry name" value="L-lactate/malate_DH"/>
</dbReference>
<dbReference type="InterPro" id="IPR022383">
    <property type="entry name" value="Lactate/malate_DH_C"/>
</dbReference>
<dbReference type="InterPro" id="IPR001236">
    <property type="entry name" value="Lactate/malate_DH_N"/>
</dbReference>
<dbReference type="InterPro" id="IPR015955">
    <property type="entry name" value="Lactate_DH/Glyco_Ohase_4_C"/>
</dbReference>
<dbReference type="InterPro" id="IPR001252">
    <property type="entry name" value="Malate_DH_AS"/>
</dbReference>
<dbReference type="InterPro" id="IPR010945">
    <property type="entry name" value="Malate_DH_type2"/>
</dbReference>
<dbReference type="InterPro" id="IPR036291">
    <property type="entry name" value="NAD(P)-bd_dom_sf"/>
</dbReference>
<dbReference type="NCBIfam" id="TIGR01759">
    <property type="entry name" value="MalateDH-SF1"/>
    <property type="match status" value="1"/>
</dbReference>
<dbReference type="NCBIfam" id="NF003916">
    <property type="entry name" value="PRK05442.1"/>
    <property type="match status" value="1"/>
</dbReference>
<dbReference type="PANTHER" id="PTHR23382">
    <property type="entry name" value="MALATE DEHYDROGENASE"/>
    <property type="match status" value="1"/>
</dbReference>
<dbReference type="Pfam" id="PF02866">
    <property type="entry name" value="Ldh_1_C"/>
    <property type="match status" value="1"/>
</dbReference>
<dbReference type="Pfam" id="PF00056">
    <property type="entry name" value="Ldh_1_N"/>
    <property type="match status" value="1"/>
</dbReference>
<dbReference type="PIRSF" id="PIRSF000102">
    <property type="entry name" value="Lac_mal_DH"/>
    <property type="match status" value="1"/>
</dbReference>
<dbReference type="SUPFAM" id="SSF56327">
    <property type="entry name" value="LDH C-terminal domain-like"/>
    <property type="match status" value="1"/>
</dbReference>
<dbReference type="SUPFAM" id="SSF51735">
    <property type="entry name" value="NAD(P)-binding Rossmann-fold domains"/>
    <property type="match status" value="1"/>
</dbReference>
<dbReference type="PROSITE" id="PS00068">
    <property type="entry name" value="MDH"/>
    <property type="match status" value="1"/>
</dbReference>
<feature type="chain" id="PRO_0000113393" description="Malate dehydrogenase">
    <location>
        <begin position="1"/>
        <end position="329"/>
    </location>
</feature>
<feature type="active site" description="Proton acceptor" evidence="1">
    <location>
        <position position="188"/>
    </location>
</feature>
<feature type="binding site" evidence="1">
    <location>
        <begin position="12"/>
        <end position="18"/>
    </location>
    <ligand>
        <name>NAD(+)</name>
        <dbReference type="ChEBI" id="CHEBI:57540"/>
    </ligand>
</feature>
<feature type="binding site" evidence="1">
    <location>
        <position position="93"/>
    </location>
    <ligand>
        <name>substrate</name>
    </ligand>
</feature>
<feature type="binding site" evidence="1">
    <location>
        <position position="99"/>
    </location>
    <ligand>
        <name>substrate</name>
    </ligand>
</feature>
<feature type="binding site" evidence="1">
    <location>
        <position position="106"/>
    </location>
    <ligand>
        <name>NAD(+)</name>
        <dbReference type="ChEBI" id="CHEBI:57540"/>
    </ligand>
</feature>
<feature type="binding site" evidence="1">
    <location>
        <position position="113"/>
    </location>
    <ligand>
        <name>NAD(+)</name>
        <dbReference type="ChEBI" id="CHEBI:57540"/>
    </ligand>
</feature>
<feature type="binding site" evidence="1">
    <location>
        <begin position="130"/>
        <end position="132"/>
    </location>
    <ligand>
        <name>NAD(+)</name>
        <dbReference type="ChEBI" id="CHEBI:57540"/>
    </ligand>
</feature>
<feature type="binding site" evidence="1">
    <location>
        <position position="132"/>
    </location>
    <ligand>
        <name>substrate</name>
    </ligand>
</feature>
<feature type="binding site" evidence="1">
    <location>
        <position position="163"/>
    </location>
    <ligand>
        <name>substrate</name>
    </ligand>
</feature>
<accession>Q82HS2</accession>
<proteinExistence type="evidence at protein level"/>
<keyword id="KW-0520">NAD</keyword>
<keyword id="KW-0560">Oxidoreductase</keyword>
<keyword id="KW-1185">Reference proteome</keyword>
<keyword id="KW-0816">Tricarboxylic acid cycle</keyword>
<organism>
    <name type="scientific">Streptomyces avermitilis (strain ATCC 31267 / DSM 46492 / JCM 5070 / NBRC 14893 / NCIMB 12804 / NRRL 8165 / MA-4680)</name>
    <dbReference type="NCBI Taxonomy" id="227882"/>
    <lineage>
        <taxon>Bacteria</taxon>
        <taxon>Bacillati</taxon>
        <taxon>Actinomycetota</taxon>
        <taxon>Actinomycetes</taxon>
        <taxon>Kitasatosporales</taxon>
        <taxon>Streptomycetaceae</taxon>
        <taxon>Streptomyces</taxon>
    </lineage>
</organism>
<comment type="function">
    <text evidence="2">Catalyzes the reversible oxidation of malate to oxaloacetate. Exhibits remarkably higher catalytic efficiency for oxaloacetate reduction than for malate oxidation in vitro. Highly specific for NAD(H). Can also use NADPH for oxaloacetate reduction, but catalytic efficiency is 97-fold higher with NADH. No activity detected with NADP(+) and malate.</text>
</comment>
<comment type="catalytic activity">
    <reaction evidence="1 2">
        <text>(S)-malate + NAD(+) = oxaloacetate + NADH + H(+)</text>
        <dbReference type="Rhea" id="RHEA:21432"/>
        <dbReference type="ChEBI" id="CHEBI:15378"/>
        <dbReference type="ChEBI" id="CHEBI:15589"/>
        <dbReference type="ChEBI" id="CHEBI:16452"/>
        <dbReference type="ChEBI" id="CHEBI:57540"/>
        <dbReference type="ChEBI" id="CHEBI:57945"/>
        <dbReference type="EC" id="1.1.1.37"/>
    </reaction>
</comment>
<comment type="activity regulation">
    <text evidence="2">Strongly inhibited by Hg(2+) and Zn(2+). Activated by Na(+), NH(4)(+), Ca(2+), Cu(2+) and Mg(2+).</text>
</comment>
<comment type="biophysicochemical properties">
    <kinetics>
        <KM evidence="2">75.5 uM for oxaloacetate (in the presence of NADH)</KM>
        <KM evidence="2">433.6 uM for oxaloacetate (in the presence of NADPH)</KM>
        <KM evidence="2">36.8 uM for NADH</KM>
        <KM evidence="2">374.1 uM for NADPH</KM>
        <KM evidence="2">386 uM for malate</KM>
        <KM evidence="2">592 uM for NAD(+)</KM>
        <text evidence="2">kcat is 1181.6 sec(-1) for NADH-dependent reduction of oxaloacetate. kcat is 67.4 sec(-1) for NADPH-dependent reduction of oxaloacetate. kcat is 4.88 sec(-1) for NAD(+)-dependent oxidation of malate.</text>
    </kinetics>
    <phDependence>
        <text evidence="2">Optimum pH is 8.0.</text>
    </phDependence>
    <temperatureDependence>
        <text evidence="2">Optimum temperature is 42 degrees Celsius.</text>
    </temperatureDependence>
</comment>
<comment type="similarity">
    <text evidence="1">Belongs to the LDH/MDH superfamily. MDH type 2 family.</text>
</comment>
<evidence type="ECO:0000255" key="1">
    <source>
        <dbReference type="HAMAP-Rule" id="MF_01517"/>
    </source>
</evidence>
<evidence type="ECO:0000269" key="2">
    <source>
    </source>
</evidence>
<evidence type="ECO:0000303" key="3">
    <source>
    </source>
</evidence>
<gene>
    <name evidence="1" type="primary">mdh</name>
    <name type="ordered locus">SAV_3436</name>
</gene>
<reference key="1">
    <citation type="journal article" date="2001" name="Proc. Natl. Acad. Sci. U.S.A.">
        <title>Genome sequence of an industrial microorganism Streptomyces avermitilis: deducing the ability of producing secondary metabolites.</title>
        <authorList>
            <person name="Omura S."/>
            <person name="Ikeda H."/>
            <person name="Ishikawa J."/>
            <person name="Hanamoto A."/>
            <person name="Takahashi C."/>
            <person name="Shinose M."/>
            <person name="Takahashi Y."/>
            <person name="Horikawa H."/>
            <person name="Nakazawa H."/>
            <person name="Osonoe T."/>
            <person name="Kikuchi H."/>
            <person name="Shiba T."/>
            <person name="Sakaki Y."/>
            <person name="Hattori M."/>
        </authorList>
    </citation>
    <scope>NUCLEOTIDE SEQUENCE [LARGE SCALE GENOMIC DNA]</scope>
    <source>
        <strain>ATCC 31267 / DSM 46492 / JCM 5070 / NBRC 14893 / NCIMB 12804 / NRRL 8165 / MA-4680</strain>
    </source>
</reference>
<reference key="2">
    <citation type="journal article" date="2003" name="Nat. Biotechnol.">
        <title>Complete genome sequence and comparative analysis of the industrial microorganism Streptomyces avermitilis.</title>
        <authorList>
            <person name="Ikeda H."/>
            <person name="Ishikawa J."/>
            <person name="Hanamoto A."/>
            <person name="Shinose M."/>
            <person name="Kikuchi H."/>
            <person name="Shiba T."/>
            <person name="Sakaki Y."/>
            <person name="Hattori M."/>
            <person name="Omura S."/>
        </authorList>
    </citation>
    <scope>NUCLEOTIDE SEQUENCE [LARGE SCALE GENOMIC DNA]</scope>
    <source>
        <strain>ATCC 31267 / DSM 46492 / JCM 5070 / NBRC 14893 / NCIMB 12804 / NRRL 8165 / MA-4680</strain>
    </source>
</reference>
<reference key="3">
    <citation type="journal article" date="2011" name="Mol. Biol. Rep.">
        <title>Expression and identification of a thermostable malate dehydrogenase from multicellular prokaryote Streptomyces avermitilis MA-4680.</title>
        <authorList>
            <person name="Wang Z.D."/>
            <person name="Wang B.J."/>
            <person name="Ge Y.D."/>
            <person name="Pan W."/>
            <person name="Wang J."/>
            <person name="Xu L."/>
            <person name="Liu A.M."/>
            <person name="Zhu G.P."/>
        </authorList>
    </citation>
    <scope>FUNCTION</scope>
    <scope>CATALYTIC ACTIVITY</scope>
    <scope>ACTIVITY REGULATION</scope>
    <scope>BIOPHYSICOCHEMICAL PROPERTIES</scope>
    <source>
        <strain>ATCC 31267 / DSM 46492 / JCM 5070 / NBRC 14893 / NCIMB 12804 / NRRL 8165 / MA-4680</strain>
    </source>
</reference>